<proteinExistence type="inferred from homology"/>
<keyword id="KW-0028">Amino-acid biosynthesis</keyword>
<keyword id="KW-0057">Aromatic amino acid biosynthesis</keyword>
<keyword id="KW-0170">Cobalt</keyword>
<keyword id="KW-0963">Cytoplasm</keyword>
<keyword id="KW-0456">Lyase</keyword>
<keyword id="KW-0479">Metal-binding</keyword>
<keyword id="KW-0520">NAD</keyword>
<keyword id="KW-0547">Nucleotide-binding</keyword>
<keyword id="KW-1185">Reference proteome</keyword>
<keyword id="KW-0862">Zinc</keyword>
<gene>
    <name evidence="1" type="primary">aroB</name>
    <name type="ordered locus">CV_0827</name>
</gene>
<protein>
    <recommendedName>
        <fullName evidence="1">3-dehydroquinate synthase</fullName>
        <shortName evidence="1">DHQS</shortName>
        <ecNumber evidence="1">4.2.3.4</ecNumber>
    </recommendedName>
</protein>
<name>AROB_CHRVO</name>
<dbReference type="EC" id="4.2.3.4" evidence="1"/>
<dbReference type="EMBL" id="AE016825">
    <property type="protein sequence ID" value="AAQ58502.1"/>
    <property type="molecule type" value="Genomic_DNA"/>
</dbReference>
<dbReference type="RefSeq" id="WP_011134382.1">
    <property type="nucleotide sequence ID" value="NC_005085.1"/>
</dbReference>
<dbReference type="SMR" id="Q7NZU4"/>
<dbReference type="STRING" id="243365.CV_0827"/>
<dbReference type="KEGG" id="cvi:CV_0827"/>
<dbReference type="eggNOG" id="COG0337">
    <property type="taxonomic scope" value="Bacteria"/>
</dbReference>
<dbReference type="HOGENOM" id="CLU_001201_0_2_4"/>
<dbReference type="OrthoDB" id="9806583at2"/>
<dbReference type="UniPathway" id="UPA00053">
    <property type="reaction ID" value="UER00085"/>
</dbReference>
<dbReference type="Proteomes" id="UP000001424">
    <property type="component" value="Chromosome"/>
</dbReference>
<dbReference type="GO" id="GO:0005737">
    <property type="term" value="C:cytoplasm"/>
    <property type="evidence" value="ECO:0007669"/>
    <property type="project" value="UniProtKB-SubCell"/>
</dbReference>
<dbReference type="GO" id="GO:0003856">
    <property type="term" value="F:3-dehydroquinate synthase activity"/>
    <property type="evidence" value="ECO:0007669"/>
    <property type="project" value="UniProtKB-UniRule"/>
</dbReference>
<dbReference type="GO" id="GO:0046872">
    <property type="term" value="F:metal ion binding"/>
    <property type="evidence" value="ECO:0007669"/>
    <property type="project" value="UniProtKB-KW"/>
</dbReference>
<dbReference type="GO" id="GO:0000166">
    <property type="term" value="F:nucleotide binding"/>
    <property type="evidence" value="ECO:0007669"/>
    <property type="project" value="UniProtKB-KW"/>
</dbReference>
<dbReference type="GO" id="GO:0008652">
    <property type="term" value="P:amino acid biosynthetic process"/>
    <property type="evidence" value="ECO:0007669"/>
    <property type="project" value="UniProtKB-KW"/>
</dbReference>
<dbReference type="GO" id="GO:0009073">
    <property type="term" value="P:aromatic amino acid family biosynthetic process"/>
    <property type="evidence" value="ECO:0007669"/>
    <property type="project" value="UniProtKB-KW"/>
</dbReference>
<dbReference type="GO" id="GO:0009423">
    <property type="term" value="P:chorismate biosynthetic process"/>
    <property type="evidence" value="ECO:0007669"/>
    <property type="project" value="UniProtKB-UniRule"/>
</dbReference>
<dbReference type="CDD" id="cd08195">
    <property type="entry name" value="DHQS"/>
    <property type="match status" value="1"/>
</dbReference>
<dbReference type="FunFam" id="1.20.1090.10:FF:000002">
    <property type="entry name" value="3-dehydroquinate synthase"/>
    <property type="match status" value="1"/>
</dbReference>
<dbReference type="FunFam" id="3.40.50.1970:FF:000001">
    <property type="entry name" value="3-dehydroquinate synthase"/>
    <property type="match status" value="1"/>
</dbReference>
<dbReference type="Gene3D" id="3.40.50.1970">
    <property type="match status" value="1"/>
</dbReference>
<dbReference type="Gene3D" id="1.20.1090.10">
    <property type="entry name" value="Dehydroquinate synthase-like - alpha domain"/>
    <property type="match status" value="1"/>
</dbReference>
<dbReference type="HAMAP" id="MF_00110">
    <property type="entry name" value="DHQ_synthase"/>
    <property type="match status" value="1"/>
</dbReference>
<dbReference type="InterPro" id="IPR050071">
    <property type="entry name" value="Dehydroquinate_synthase"/>
</dbReference>
<dbReference type="InterPro" id="IPR016037">
    <property type="entry name" value="DHQ_synth_AroB"/>
</dbReference>
<dbReference type="InterPro" id="IPR030963">
    <property type="entry name" value="DHQ_synth_fam"/>
</dbReference>
<dbReference type="InterPro" id="IPR030960">
    <property type="entry name" value="DHQS/DOIS_N"/>
</dbReference>
<dbReference type="InterPro" id="IPR056179">
    <property type="entry name" value="DHQS_C"/>
</dbReference>
<dbReference type="NCBIfam" id="TIGR01357">
    <property type="entry name" value="aroB"/>
    <property type="match status" value="1"/>
</dbReference>
<dbReference type="PANTHER" id="PTHR43622">
    <property type="entry name" value="3-DEHYDROQUINATE SYNTHASE"/>
    <property type="match status" value="1"/>
</dbReference>
<dbReference type="PANTHER" id="PTHR43622:SF7">
    <property type="entry name" value="3-DEHYDROQUINATE SYNTHASE, CHLOROPLASTIC"/>
    <property type="match status" value="1"/>
</dbReference>
<dbReference type="Pfam" id="PF01761">
    <property type="entry name" value="DHQ_synthase"/>
    <property type="match status" value="1"/>
</dbReference>
<dbReference type="Pfam" id="PF24621">
    <property type="entry name" value="DHQS_C"/>
    <property type="match status" value="1"/>
</dbReference>
<dbReference type="PIRSF" id="PIRSF001455">
    <property type="entry name" value="DHQ_synth"/>
    <property type="match status" value="1"/>
</dbReference>
<dbReference type="SUPFAM" id="SSF56796">
    <property type="entry name" value="Dehydroquinate synthase-like"/>
    <property type="match status" value="1"/>
</dbReference>
<comment type="function">
    <text evidence="1">Catalyzes the conversion of 3-deoxy-D-arabino-heptulosonate 7-phosphate (DAHP) to dehydroquinate (DHQ).</text>
</comment>
<comment type="catalytic activity">
    <reaction evidence="1">
        <text>7-phospho-2-dehydro-3-deoxy-D-arabino-heptonate = 3-dehydroquinate + phosphate</text>
        <dbReference type="Rhea" id="RHEA:21968"/>
        <dbReference type="ChEBI" id="CHEBI:32364"/>
        <dbReference type="ChEBI" id="CHEBI:43474"/>
        <dbReference type="ChEBI" id="CHEBI:58394"/>
        <dbReference type="EC" id="4.2.3.4"/>
    </reaction>
</comment>
<comment type="cofactor">
    <cofactor evidence="1">
        <name>NAD(+)</name>
        <dbReference type="ChEBI" id="CHEBI:57540"/>
    </cofactor>
</comment>
<comment type="cofactor">
    <cofactor evidence="1">
        <name>Co(2+)</name>
        <dbReference type="ChEBI" id="CHEBI:48828"/>
    </cofactor>
    <cofactor evidence="1">
        <name>Zn(2+)</name>
        <dbReference type="ChEBI" id="CHEBI:29105"/>
    </cofactor>
    <text evidence="1">Binds 1 divalent metal cation per subunit. Can use either Co(2+) or Zn(2+).</text>
</comment>
<comment type="pathway">
    <text evidence="1">Metabolic intermediate biosynthesis; chorismate biosynthesis; chorismate from D-erythrose 4-phosphate and phosphoenolpyruvate: step 2/7.</text>
</comment>
<comment type="subcellular location">
    <subcellularLocation>
        <location evidence="1">Cytoplasm</location>
    </subcellularLocation>
</comment>
<comment type="similarity">
    <text evidence="1">Belongs to the sugar phosphate cyclases superfamily. Dehydroquinate synthase family.</text>
</comment>
<accession>Q7NZU4</accession>
<reference key="1">
    <citation type="journal article" date="2003" name="Proc. Natl. Acad. Sci. U.S.A.">
        <title>The complete genome sequence of Chromobacterium violaceum reveals remarkable and exploitable bacterial adaptability.</title>
        <authorList>
            <person name="Vasconcelos A.T.R."/>
            <person name="de Almeida D.F."/>
            <person name="Hungria M."/>
            <person name="Guimaraes C.T."/>
            <person name="Antonio R.V."/>
            <person name="Almeida F.C."/>
            <person name="de Almeida L.G.P."/>
            <person name="de Almeida R."/>
            <person name="Alves-Gomes J.A."/>
            <person name="Andrade E.M."/>
            <person name="Araripe J."/>
            <person name="de Araujo M.F.F."/>
            <person name="Astolfi-Filho S."/>
            <person name="Azevedo V."/>
            <person name="Baptista A.J."/>
            <person name="Bataus L.A.M."/>
            <person name="Batista J.S."/>
            <person name="Belo A."/>
            <person name="van den Berg C."/>
            <person name="Bogo M."/>
            <person name="Bonatto S."/>
            <person name="Bordignon J."/>
            <person name="Brigido M.M."/>
            <person name="Brito C.A."/>
            <person name="Brocchi M."/>
            <person name="Burity H.A."/>
            <person name="Camargo A.A."/>
            <person name="Cardoso D.D.P."/>
            <person name="Carneiro N.P."/>
            <person name="Carraro D.M."/>
            <person name="Carvalho C.M.B."/>
            <person name="Cascardo J.C.M."/>
            <person name="Cavada B.S."/>
            <person name="Chueire L.M.O."/>
            <person name="Creczynski-Pasa T.B."/>
            <person name="Cunha-Junior N.C."/>
            <person name="Fagundes N."/>
            <person name="Falcao C.L."/>
            <person name="Fantinatti F."/>
            <person name="Farias I.P."/>
            <person name="Felipe M.S.S."/>
            <person name="Ferrari L.P."/>
            <person name="Ferro J.A."/>
            <person name="Ferro M.I.T."/>
            <person name="Franco G.R."/>
            <person name="Freitas N.S.A."/>
            <person name="Furlan L.R."/>
            <person name="Gazzinelli R.T."/>
            <person name="Gomes E.A."/>
            <person name="Goncalves P.R."/>
            <person name="Grangeiro T.B."/>
            <person name="Grattapaglia D."/>
            <person name="Grisard E.C."/>
            <person name="Hanna E.S."/>
            <person name="Jardim S.N."/>
            <person name="Laurino J."/>
            <person name="Leoi L.C.T."/>
            <person name="Lima L.F.A."/>
            <person name="Loureiro M.F."/>
            <person name="Lyra M.C.C.P."/>
            <person name="Madeira H.M.F."/>
            <person name="Manfio G.P."/>
            <person name="Maranhao A.Q."/>
            <person name="Martins W.S."/>
            <person name="di Mauro S.M.Z."/>
            <person name="de Medeiros S.R.B."/>
            <person name="Meissner R.V."/>
            <person name="Moreira M.A.M."/>
            <person name="Nascimento F.F."/>
            <person name="Nicolas M.F."/>
            <person name="Oliveira J.G."/>
            <person name="Oliveira S.C."/>
            <person name="Paixao R.F.C."/>
            <person name="Parente J.A."/>
            <person name="Pedrosa F.O."/>
            <person name="Pena S.D.J."/>
            <person name="Pereira J.O."/>
            <person name="Pereira M."/>
            <person name="Pinto L.S.R.C."/>
            <person name="Pinto L.S."/>
            <person name="Porto J.I.R."/>
            <person name="Potrich D.P."/>
            <person name="Ramalho-Neto C.E."/>
            <person name="Reis A.M.M."/>
            <person name="Rigo L.U."/>
            <person name="Rondinelli E."/>
            <person name="Santos E.B.P."/>
            <person name="Santos F.R."/>
            <person name="Schneider M.P.C."/>
            <person name="Seuanez H.N."/>
            <person name="Silva A.M.R."/>
            <person name="da Silva A.L.C."/>
            <person name="Silva D.W."/>
            <person name="Silva R."/>
            <person name="Simoes I.C."/>
            <person name="Simon D."/>
            <person name="Soares C.M.A."/>
            <person name="Soares R.B.A."/>
            <person name="Souza E.M."/>
            <person name="Souza K.R.L."/>
            <person name="Souza R.C."/>
            <person name="Steffens M.B.R."/>
            <person name="Steindel M."/>
            <person name="Teixeira S.R."/>
            <person name="Urmenyi T."/>
            <person name="Vettore A."/>
            <person name="Wassem R."/>
            <person name="Zaha A."/>
            <person name="Simpson A.J.G."/>
        </authorList>
    </citation>
    <scope>NUCLEOTIDE SEQUENCE [LARGE SCALE GENOMIC DNA]</scope>
    <source>
        <strain>ATCC 12472 / DSM 30191 / JCM 1249 / CCUG 213 / NBRC 12614 / NCIMB 9131 / NCTC 9757 / MK</strain>
    </source>
</reference>
<evidence type="ECO:0000255" key="1">
    <source>
        <dbReference type="HAMAP-Rule" id="MF_00110"/>
    </source>
</evidence>
<sequence length="359" mass="38342">MITLDLILPDTRYPIHIGHGLLEQVDLLLPHLPLPKAAIVSNATVAPLYLQRLQQALEARGVACSSVVLPDGEQHKDWQTLNLIFDALLSGNAERKTTLIALGGGVIGDMTGFAAACYQRGAPFIQIPTTLLAQVDSSVGGKTAINHPLGKNMIGAFYQPKAVIADMELLATLPDRELSAGLAEVIKYGLLGDAGFLAWLEANMAKLRARDGDALQYAVKRSCEMKAAIVAEDEKENGVRALLNLGHTFGHAIEAGMGYGAWLHGEAVAAGMVLAAAASAELGWIGRDEAERVRRLIAAAGLPVKAPSMPTEQWLNLMSHDKKVEAGTVRFVLLRELGQAVIKSGLDTALLDKILRENS</sequence>
<feature type="chain" id="PRO_0000140729" description="3-dehydroquinate synthase">
    <location>
        <begin position="1"/>
        <end position="359"/>
    </location>
</feature>
<feature type="binding site" evidence="1">
    <location>
        <begin position="71"/>
        <end position="76"/>
    </location>
    <ligand>
        <name>NAD(+)</name>
        <dbReference type="ChEBI" id="CHEBI:57540"/>
    </ligand>
</feature>
<feature type="binding site" evidence="1">
    <location>
        <begin position="105"/>
        <end position="109"/>
    </location>
    <ligand>
        <name>NAD(+)</name>
        <dbReference type="ChEBI" id="CHEBI:57540"/>
    </ligand>
</feature>
<feature type="binding site" evidence="1">
    <location>
        <begin position="129"/>
        <end position="130"/>
    </location>
    <ligand>
        <name>NAD(+)</name>
        <dbReference type="ChEBI" id="CHEBI:57540"/>
    </ligand>
</feature>
<feature type="binding site" evidence="1">
    <location>
        <position position="142"/>
    </location>
    <ligand>
        <name>NAD(+)</name>
        <dbReference type="ChEBI" id="CHEBI:57540"/>
    </ligand>
</feature>
<feature type="binding site" evidence="1">
    <location>
        <position position="151"/>
    </location>
    <ligand>
        <name>NAD(+)</name>
        <dbReference type="ChEBI" id="CHEBI:57540"/>
    </ligand>
</feature>
<feature type="binding site" evidence="1">
    <location>
        <position position="184"/>
    </location>
    <ligand>
        <name>Zn(2+)</name>
        <dbReference type="ChEBI" id="CHEBI:29105"/>
    </ligand>
</feature>
<feature type="binding site" evidence="1">
    <location>
        <position position="247"/>
    </location>
    <ligand>
        <name>Zn(2+)</name>
        <dbReference type="ChEBI" id="CHEBI:29105"/>
    </ligand>
</feature>
<feature type="binding site" evidence="1">
    <location>
        <position position="264"/>
    </location>
    <ligand>
        <name>Zn(2+)</name>
        <dbReference type="ChEBI" id="CHEBI:29105"/>
    </ligand>
</feature>
<organism>
    <name type="scientific">Chromobacterium violaceum (strain ATCC 12472 / DSM 30191 / JCM 1249 / CCUG 213 / NBRC 12614 / NCIMB 9131 / NCTC 9757 / MK)</name>
    <dbReference type="NCBI Taxonomy" id="243365"/>
    <lineage>
        <taxon>Bacteria</taxon>
        <taxon>Pseudomonadati</taxon>
        <taxon>Pseudomonadota</taxon>
        <taxon>Betaproteobacteria</taxon>
        <taxon>Neisseriales</taxon>
        <taxon>Chromobacteriaceae</taxon>
        <taxon>Chromobacterium</taxon>
    </lineage>
</organism>